<sequence length="181" mass="19446">MPLIIGIDPGSRLTGYGIIEKDGSKLRFVDAGTIRTETQEMPERLKRIFAGVERIVKFHGPTEAAVEQVFMAQNPDSALKLGQARGAAIAALVNLDLQVAEYTARQIKQSVVGYGAADKEQVQMMVMRLLNLTIKPQADAADALAAAICHAHASGSMSKLTVLNALGGMARGRSRSSSRRR</sequence>
<protein>
    <recommendedName>
        <fullName evidence="1">Crossover junction endodeoxyribonuclease RuvC</fullName>
        <ecNumber evidence="1">3.1.21.10</ecNumber>
    </recommendedName>
    <alternativeName>
        <fullName evidence="1">Holliday junction nuclease RuvC</fullName>
    </alternativeName>
    <alternativeName>
        <fullName evidence="1">Holliday junction resolvase RuvC</fullName>
    </alternativeName>
</protein>
<comment type="function">
    <text evidence="1">The RuvA-RuvB-RuvC complex processes Holliday junction (HJ) DNA during genetic recombination and DNA repair. Endonuclease that resolves HJ intermediates. Cleaves cruciform DNA by making single-stranded nicks across the HJ at symmetrical positions within the homologous arms, yielding a 5'-phosphate and a 3'-hydroxyl group; requires a central core of homology in the junction. The consensus cleavage sequence is 5'-(A/T)TT(C/G)-3'. Cleavage occurs on the 3'-side of the TT dinucleotide at the point of strand exchange. HJ branch migration catalyzed by RuvA-RuvB allows RuvC to scan DNA until it finds its consensus sequence, where it cleaves and resolves the cruciform DNA.</text>
</comment>
<comment type="catalytic activity">
    <reaction evidence="1">
        <text>Endonucleolytic cleavage at a junction such as a reciprocal single-stranded crossover between two homologous DNA duplexes (Holliday junction).</text>
        <dbReference type="EC" id="3.1.21.10"/>
    </reaction>
</comment>
<comment type="cofactor">
    <cofactor evidence="1">
        <name>Mg(2+)</name>
        <dbReference type="ChEBI" id="CHEBI:18420"/>
    </cofactor>
    <text evidence="1">Binds 2 Mg(2+) ion per subunit.</text>
</comment>
<comment type="subunit">
    <text evidence="1">Homodimer which binds Holliday junction (HJ) DNA. The HJ becomes 2-fold symmetrical on binding to RuvC with unstacked arms; it has a different conformation from HJ DNA in complex with RuvA. In the full resolvosome a probable DNA-RuvA(4)-RuvB(12)-RuvC(2) complex forms which resolves the HJ.</text>
</comment>
<comment type="subcellular location">
    <subcellularLocation>
        <location evidence="1">Cytoplasm</location>
    </subcellularLocation>
</comment>
<comment type="similarity">
    <text evidence="1">Belongs to the RuvC family.</text>
</comment>
<name>RUVC_ACIBY</name>
<evidence type="ECO:0000255" key="1">
    <source>
        <dbReference type="HAMAP-Rule" id="MF_00034"/>
    </source>
</evidence>
<feature type="chain" id="PRO_1000090497" description="Crossover junction endodeoxyribonuclease RuvC">
    <location>
        <begin position="1"/>
        <end position="181"/>
    </location>
</feature>
<feature type="active site" evidence="1">
    <location>
        <position position="8"/>
    </location>
</feature>
<feature type="active site" evidence="1">
    <location>
        <position position="67"/>
    </location>
</feature>
<feature type="active site" evidence="1">
    <location>
        <position position="139"/>
    </location>
</feature>
<feature type="binding site" evidence="1">
    <location>
        <position position="8"/>
    </location>
    <ligand>
        <name>Mg(2+)</name>
        <dbReference type="ChEBI" id="CHEBI:18420"/>
        <label>1</label>
    </ligand>
</feature>
<feature type="binding site" evidence="1">
    <location>
        <position position="67"/>
    </location>
    <ligand>
        <name>Mg(2+)</name>
        <dbReference type="ChEBI" id="CHEBI:18420"/>
        <label>2</label>
    </ligand>
</feature>
<feature type="binding site" evidence="1">
    <location>
        <position position="139"/>
    </location>
    <ligand>
        <name>Mg(2+)</name>
        <dbReference type="ChEBI" id="CHEBI:18420"/>
        <label>1</label>
    </ligand>
</feature>
<accession>B0VCA5</accession>
<reference key="1">
    <citation type="journal article" date="2008" name="PLoS ONE">
        <title>Comparative analysis of Acinetobacters: three genomes for three lifestyles.</title>
        <authorList>
            <person name="Vallenet D."/>
            <person name="Nordmann P."/>
            <person name="Barbe V."/>
            <person name="Poirel L."/>
            <person name="Mangenot S."/>
            <person name="Bataille E."/>
            <person name="Dossat C."/>
            <person name="Gas S."/>
            <person name="Kreimeyer A."/>
            <person name="Lenoble P."/>
            <person name="Oztas S."/>
            <person name="Poulain J."/>
            <person name="Segurens B."/>
            <person name="Robert C."/>
            <person name="Abergel C."/>
            <person name="Claverie J.-M."/>
            <person name="Raoult D."/>
            <person name="Medigue C."/>
            <person name="Weissenbach J."/>
            <person name="Cruveiller S."/>
        </authorList>
    </citation>
    <scope>NUCLEOTIDE SEQUENCE [LARGE SCALE GENOMIC DNA]</scope>
    <source>
        <strain>AYE</strain>
    </source>
</reference>
<gene>
    <name evidence="1" type="primary">ruvC</name>
    <name type="ordered locus">ABAYE2126</name>
</gene>
<proteinExistence type="inferred from homology"/>
<keyword id="KW-0963">Cytoplasm</keyword>
<keyword id="KW-0227">DNA damage</keyword>
<keyword id="KW-0233">DNA recombination</keyword>
<keyword id="KW-0234">DNA repair</keyword>
<keyword id="KW-0238">DNA-binding</keyword>
<keyword id="KW-0255">Endonuclease</keyword>
<keyword id="KW-0378">Hydrolase</keyword>
<keyword id="KW-0460">Magnesium</keyword>
<keyword id="KW-0479">Metal-binding</keyword>
<keyword id="KW-0540">Nuclease</keyword>
<dbReference type="EC" id="3.1.21.10" evidence="1"/>
<dbReference type="EMBL" id="CU459141">
    <property type="protein sequence ID" value="CAM86997.1"/>
    <property type="molecule type" value="Genomic_DNA"/>
</dbReference>
<dbReference type="RefSeq" id="WP_001128330.1">
    <property type="nucleotide sequence ID" value="NZ_JBDGFB010000001.1"/>
</dbReference>
<dbReference type="SMR" id="B0VCA5"/>
<dbReference type="EnsemblBacteria" id="CAM86997">
    <property type="protein sequence ID" value="CAM86997"/>
    <property type="gene ID" value="ABAYE2126"/>
</dbReference>
<dbReference type="GeneID" id="92893740"/>
<dbReference type="KEGG" id="aby:ABAYE2126"/>
<dbReference type="HOGENOM" id="CLU_091257_2_1_6"/>
<dbReference type="GO" id="GO:0005737">
    <property type="term" value="C:cytoplasm"/>
    <property type="evidence" value="ECO:0007669"/>
    <property type="project" value="UniProtKB-SubCell"/>
</dbReference>
<dbReference type="GO" id="GO:0048476">
    <property type="term" value="C:Holliday junction resolvase complex"/>
    <property type="evidence" value="ECO:0007669"/>
    <property type="project" value="UniProtKB-UniRule"/>
</dbReference>
<dbReference type="GO" id="GO:0008821">
    <property type="term" value="F:crossover junction DNA endonuclease activity"/>
    <property type="evidence" value="ECO:0007669"/>
    <property type="project" value="UniProtKB-UniRule"/>
</dbReference>
<dbReference type="GO" id="GO:0003677">
    <property type="term" value="F:DNA binding"/>
    <property type="evidence" value="ECO:0007669"/>
    <property type="project" value="UniProtKB-KW"/>
</dbReference>
<dbReference type="GO" id="GO:0000287">
    <property type="term" value="F:magnesium ion binding"/>
    <property type="evidence" value="ECO:0007669"/>
    <property type="project" value="UniProtKB-UniRule"/>
</dbReference>
<dbReference type="GO" id="GO:0006310">
    <property type="term" value="P:DNA recombination"/>
    <property type="evidence" value="ECO:0007669"/>
    <property type="project" value="UniProtKB-UniRule"/>
</dbReference>
<dbReference type="GO" id="GO:0006281">
    <property type="term" value="P:DNA repair"/>
    <property type="evidence" value="ECO:0007669"/>
    <property type="project" value="UniProtKB-UniRule"/>
</dbReference>
<dbReference type="CDD" id="cd16962">
    <property type="entry name" value="RuvC"/>
    <property type="match status" value="1"/>
</dbReference>
<dbReference type="FunFam" id="3.30.420.10:FF:000002">
    <property type="entry name" value="Crossover junction endodeoxyribonuclease RuvC"/>
    <property type="match status" value="1"/>
</dbReference>
<dbReference type="Gene3D" id="3.30.420.10">
    <property type="entry name" value="Ribonuclease H-like superfamily/Ribonuclease H"/>
    <property type="match status" value="1"/>
</dbReference>
<dbReference type="HAMAP" id="MF_00034">
    <property type="entry name" value="RuvC"/>
    <property type="match status" value="1"/>
</dbReference>
<dbReference type="InterPro" id="IPR012337">
    <property type="entry name" value="RNaseH-like_sf"/>
</dbReference>
<dbReference type="InterPro" id="IPR036397">
    <property type="entry name" value="RNaseH_sf"/>
</dbReference>
<dbReference type="InterPro" id="IPR020563">
    <property type="entry name" value="X-over_junc_endoDNase_Mg_BS"/>
</dbReference>
<dbReference type="InterPro" id="IPR002176">
    <property type="entry name" value="X-over_junc_endoDNase_RuvC"/>
</dbReference>
<dbReference type="NCBIfam" id="TIGR00228">
    <property type="entry name" value="ruvC"/>
    <property type="match status" value="1"/>
</dbReference>
<dbReference type="PANTHER" id="PTHR30194">
    <property type="entry name" value="CROSSOVER JUNCTION ENDODEOXYRIBONUCLEASE RUVC"/>
    <property type="match status" value="1"/>
</dbReference>
<dbReference type="PANTHER" id="PTHR30194:SF3">
    <property type="entry name" value="CROSSOVER JUNCTION ENDODEOXYRIBONUCLEASE RUVC"/>
    <property type="match status" value="1"/>
</dbReference>
<dbReference type="Pfam" id="PF02075">
    <property type="entry name" value="RuvC"/>
    <property type="match status" value="1"/>
</dbReference>
<dbReference type="PRINTS" id="PR00696">
    <property type="entry name" value="RSOLVASERUVC"/>
</dbReference>
<dbReference type="SUPFAM" id="SSF53098">
    <property type="entry name" value="Ribonuclease H-like"/>
    <property type="match status" value="1"/>
</dbReference>
<dbReference type="PROSITE" id="PS01321">
    <property type="entry name" value="RUVC"/>
    <property type="match status" value="1"/>
</dbReference>
<organism>
    <name type="scientific">Acinetobacter baumannii (strain AYE)</name>
    <dbReference type="NCBI Taxonomy" id="509173"/>
    <lineage>
        <taxon>Bacteria</taxon>
        <taxon>Pseudomonadati</taxon>
        <taxon>Pseudomonadota</taxon>
        <taxon>Gammaproteobacteria</taxon>
        <taxon>Moraxellales</taxon>
        <taxon>Moraxellaceae</taxon>
        <taxon>Acinetobacter</taxon>
        <taxon>Acinetobacter calcoaceticus/baumannii complex</taxon>
    </lineage>
</organism>